<gene>
    <name type="primary">SERPINA13P</name>
    <name type="synonym">SERPINA13</name>
    <name type="ORF">UNQ6121/PRO20043</name>
</gene>
<comment type="subcellular location">
    <subcellularLocation>
        <location evidence="2">Secreted</location>
    </subcellularLocation>
</comment>
<comment type="similarity">
    <text evidence="2">Belongs to the serpin family.</text>
</comment>
<comment type="caution">
    <text evidence="2">Could be the product of a pseudogene.</text>
</comment>
<reference key="1">
    <citation type="journal article" date="2003" name="Genome Res.">
        <title>The secreted protein discovery initiative (SPDI), a large-scale effort to identify novel human secreted and transmembrane proteins: a bioinformatics assessment.</title>
        <authorList>
            <person name="Clark H.F."/>
            <person name="Gurney A.L."/>
            <person name="Abaya E."/>
            <person name="Baker K."/>
            <person name="Baldwin D.T."/>
            <person name="Brush J."/>
            <person name="Chen J."/>
            <person name="Chow B."/>
            <person name="Chui C."/>
            <person name="Crowley C."/>
            <person name="Currell B."/>
            <person name="Deuel B."/>
            <person name="Dowd P."/>
            <person name="Eaton D."/>
            <person name="Foster J.S."/>
            <person name="Grimaldi C."/>
            <person name="Gu Q."/>
            <person name="Hass P.E."/>
            <person name="Heldens S."/>
            <person name="Huang A."/>
            <person name="Kim H.S."/>
            <person name="Klimowski L."/>
            <person name="Jin Y."/>
            <person name="Johnson S."/>
            <person name="Lee J."/>
            <person name="Lewis L."/>
            <person name="Liao D."/>
            <person name="Mark M.R."/>
            <person name="Robbie E."/>
            <person name="Sanchez C."/>
            <person name="Schoenfeld J."/>
            <person name="Seshagiri S."/>
            <person name="Simmons L."/>
            <person name="Singh J."/>
            <person name="Smith V."/>
            <person name="Stinson J."/>
            <person name="Vagts A."/>
            <person name="Vandlen R.L."/>
            <person name="Watanabe C."/>
            <person name="Wieand D."/>
            <person name="Woods K."/>
            <person name="Xie M.-H."/>
            <person name="Yansura D.G."/>
            <person name="Yi S."/>
            <person name="Yu G."/>
            <person name="Yuan J."/>
            <person name="Zhang M."/>
            <person name="Zhang Z."/>
            <person name="Goddard A.D."/>
            <person name="Wood W.I."/>
            <person name="Godowski P.J."/>
            <person name="Gray A.M."/>
        </authorList>
    </citation>
    <scope>NUCLEOTIDE SEQUENCE [LARGE SCALE MRNA]</scope>
</reference>
<protein>
    <recommendedName>
        <fullName>Putative serpin A13</fullName>
    </recommendedName>
</protein>
<evidence type="ECO:0000255" key="1"/>
<evidence type="ECO:0000305" key="2"/>
<accession>Q6UXR4</accession>
<dbReference type="EMBL" id="AY358238">
    <property type="protein sequence ID" value="AAQ88605.1"/>
    <property type="molecule type" value="mRNA"/>
</dbReference>
<dbReference type="SMR" id="Q6UXR4"/>
<dbReference type="FunCoup" id="Q6UXR4">
    <property type="interactions" value="7"/>
</dbReference>
<dbReference type="MEROPS" id="I04.966"/>
<dbReference type="GlyCosmos" id="Q6UXR4">
    <property type="glycosylation" value="2 sites, No reported glycans"/>
</dbReference>
<dbReference type="GlyGen" id="Q6UXR4">
    <property type="glycosylation" value="2 sites"/>
</dbReference>
<dbReference type="BioMuta" id="HGNC:30909"/>
<dbReference type="DMDM" id="74749427"/>
<dbReference type="MassIVE" id="Q6UXR4"/>
<dbReference type="AGR" id="HGNC:30909"/>
<dbReference type="GeneCards" id="SERPINA13P"/>
<dbReference type="HGNC" id="HGNC:30909">
    <property type="gene designation" value="SERPINA13P"/>
</dbReference>
<dbReference type="neXtProt" id="NX_Q6UXR4"/>
<dbReference type="InParanoid" id="Q6UXR4"/>
<dbReference type="PAN-GO" id="Q6UXR4">
    <property type="GO annotations" value="3 GO annotations based on evolutionary models"/>
</dbReference>
<dbReference type="PhylomeDB" id="Q6UXR4"/>
<dbReference type="Pharos" id="Q6UXR4">
    <property type="development level" value="Tdark"/>
</dbReference>
<dbReference type="PRO" id="PR:Q6UXR4"/>
<dbReference type="Proteomes" id="UP000005640">
    <property type="component" value="Unplaced"/>
</dbReference>
<dbReference type="RNAct" id="Q6UXR4">
    <property type="molecule type" value="protein"/>
</dbReference>
<dbReference type="GO" id="GO:0005615">
    <property type="term" value="C:extracellular space"/>
    <property type="evidence" value="ECO:0000318"/>
    <property type="project" value="GO_Central"/>
</dbReference>
<dbReference type="GO" id="GO:0004867">
    <property type="term" value="F:serine-type endopeptidase inhibitor activity"/>
    <property type="evidence" value="ECO:0000318"/>
    <property type="project" value="GO_Central"/>
</dbReference>
<dbReference type="FunFam" id="2.30.39.10:FF:000003">
    <property type="entry name" value="alpha-1-antitrypsin isoform X1"/>
    <property type="match status" value="1"/>
</dbReference>
<dbReference type="FunFam" id="3.30.497.10:FF:000059">
    <property type="entry name" value="Putative serpin A13"/>
    <property type="match status" value="1"/>
</dbReference>
<dbReference type="Gene3D" id="2.30.39.10">
    <property type="entry name" value="Alpha-1-antitrypsin, domain 1"/>
    <property type="match status" value="1"/>
</dbReference>
<dbReference type="Gene3D" id="3.30.497.10">
    <property type="entry name" value="Antithrombin, subunit I, domain 2"/>
    <property type="match status" value="2"/>
</dbReference>
<dbReference type="InterPro" id="IPR023796">
    <property type="entry name" value="Serpin_dom"/>
</dbReference>
<dbReference type="InterPro" id="IPR000215">
    <property type="entry name" value="Serpin_fam"/>
</dbReference>
<dbReference type="InterPro" id="IPR036186">
    <property type="entry name" value="Serpin_sf"/>
</dbReference>
<dbReference type="InterPro" id="IPR042178">
    <property type="entry name" value="Serpin_sf_1"/>
</dbReference>
<dbReference type="InterPro" id="IPR042185">
    <property type="entry name" value="Serpin_sf_2"/>
</dbReference>
<dbReference type="PANTHER" id="PTHR11461">
    <property type="entry name" value="SERINE PROTEASE INHIBITOR, SERPIN"/>
    <property type="match status" value="1"/>
</dbReference>
<dbReference type="PANTHER" id="PTHR11461:SF377">
    <property type="entry name" value="SERPIN A13-RELATED"/>
    <property type="match status" value="1"/>
</dbReference>
<dbReference type="Pfam" id="PF00079">
    <property type="entry name" value="Serpin"/>
    <property type="match status" value="2"/>
</dbReference>
<dbReference type="SMART" id="SM00093">
    <property type="entry name" value="SERPIN"/>
    <property type="match status" value="1"/>
</dbReference>
<dbReference type="SUPFAM" id="SSF56574">
    <property type="entry name" value="Serpins"/>
    <property type="match status" value="1"/>
</dbReference>
<organism>
    <name type="scientific">Homo sapiens</name>
    <name type="common">Human</name>
    <dbReference type="NCBI Taxonomy" id="9606"/>
    <lineage>
        <taxon>Eukaryota</taxon>
        <taxon>Metazoa</taxon>
        <taxon>Chordata</taxon>
        <taxon>Craniata</taxon>
        <taxon>Vertebrata</taxon>
        <taxon>Euteleostomi</taxon>
        <taxon>Mammalia</taxon>
        <taxon>Eutheria</taxon>
        <taxon>Euarchontoglires</taxon>
        <taxon>Primates</taxon>
        <taxon>Haplorrhini</taxon>
        <taxon>Catarrhini</taxon>
        <taxon>Hominidae</taxon>
        <taxon>Homo</taxon>
    </lineage>
</organism>
<keyword id="KW-0325">Glycoprotein</keyword>
<keyword id="KW-0646">Protease inhibitor</keyword>
<keyword id="KW-1185">Reference proteome</keyword>
<keyword id="KW-0964">Secreted</keyword>
<keyword id="KW-0722">Serine protease inhibitor</keyword>
<keyword id="KW-0732">Signal</keyword>
<proteinExistence type="uncertain"/>
<sequence>MEASRWWLLVTVLMAGAHCVALVDQEASDLIHSGPQDSSPGPALPCHKISVSNIDFAFKLYRQLALNAPGENILFFPVSISLALAMLSWGAPVASRTQLLEGLGFTLTVVPEEEIQEGFWDLLIRLRGQGPRLLLTMDQRRFSGLGARANQSLEEAQKHIDEYTEQQTQGKLGAWEKDLGSETTAVLVNHMLLRAEWMKPFDSHATSPKEFFVDEHSAVWVPMMKEKASHRFLHDRELQCSVLRMDHAGNTTTFFIFPNRGKMRHLEDALLPETLIKWDSLLRTRELDFHFPKFSISRTCRLEMLLP</sequence>
<feature type="signal peptide" evidence="1">
    <location>
        <begin position="1"/>
        <end position="21"/>
    </location>
</feature>
<feature type="chain" id="PRO_0000041979" description="Putative serpin A13">
    <location>
        <begin position="22"/>
        <end position="307"/>
    </location>
</feature>
<feature type="glycosylation site" description="N-linked (GlcNAc...) asparagine" evidence="1">
    <location>
        <position position="150"/>
    </location>
</feature>
<feature type="glycosylation site" description="N-linked (GlcNAc...) asparagine" evidence="1">
    <location>
        <position position="250"/>
    </location>
</feature>
<name>SPA13_HUMAN</name>